<name>RL35_SYNAS</name>
<protein>
    <recommendedName>
        <fullName evidence="1">Large ribosomal subunit protein bL35</fullName>
    </recommendedName>
    <alternativeName>
        <fullName evidence="3">50S ribosomal protein L35</fullName>
    </alternativeName>
</protein>
<dbReference type="EMBL" id="CP000252">
    <property type="protein sequence ID" value="ABC76533.1"/>
    <property type="molecule type" value="Genomic_DNA"/>
</dbReference>
<dbReference type="RefSeq" id="WP_011416567.1">
    <property type="nucleotide sequence ID" value="NC_007759.1"/>
</dbReference>
<dbReference type="SMR" id="Q2LR20"/>
<dbReference type="FunCoup" id="Q2LR20">
    <property type="interactions" value="341"/>
</dbReference>
<dbReference type="STRING" id="56780.SYN_01719"/>
<dbReference type="KEGG" id="sat:SYN_01719"/>
<dbReference type="eggNOG" id="COG0291">
    <property type="taxonomic scope" value="Bacteria"/>
</dbReference>
<dbReference type="HOGENOM" id="CLU_169643_4_3_7"/>
<dbReference type="InParanoid" id="Q2LR20"/>
<dbReference type="OrthoDB" id="9804851at2"/>
<dbReference type="Proteomes" id="UP000001933">
    <property type="component" value="Chromosome"/>
</dbReference>
<dbReference type="GO" id="GO:0022625">
    <property type="term" value="C:cytosolic large ribosomal subunit"/>
    <property type="evidence" value="ECO:0007669"/>
    <property type="project" value="TreeGrafter"/>
</dbReference>
<dbReference type="GO" id="GO:0003735">
    <property type="term" value="F:structural constituent of ribosome"/>
    <property type="evidence" value="ECO:0007669"/>
    <property type="project" value="InterPro"/>
</dbReference>
<dbReference type="GO" id="GO:0006412">
    <property type="term" value="P:translation"/>
    <property type="evidence" value="ECO:0007669"/>
    <property type="project" value="UniProtKB-UniRule"/>
</dbReference>
<dbReference type="FunFam" id="4.10.410.60:FF:000001">
    <property type="entry name" value="50S ribosomal protein L35"/>
    <property type="match status" value="1"/>
</dbReference>
<dbReference type="Gene3D" id="4.10.410.60">
    <property type="match status" value="1"/>
</dbReference>
<dbReference type="HAMAP" id="MF_00514">
    <property type="entry name" value="Ribosomal_bL35"/>
    <property type="match status" value="1"/>
</dbReference>
<dbReference type="InterPro" id="IPR001706">
    <property type="entry name" value="Ribosomal_bL35"/>
</dbReference>
<dbReference type="InterPro" id="IPR021137">
    <property type="entry name" value="Ribosomal_bL35-like"/>
</dbReference>
<dbReference type="InterPro" id="IPR018265">
    <property type="entry name" value="Ribosomal_bL35_CS"/>
</dbReference>
<dbReference type="InterPro" id="IPR037229">
    <property type="entry name" value="Ribosomal_bL35_sf"/>
</dbReference>
<dbReference type="NCBIfam" id="TIGR00001">
    <property type="entry name" value="rpmI_bact"/>
    <property type="match status" value="1"/>
</dbReference>
<dbReference type="PANTHER" id="PTHR33343">
    <property type="entry name" value="54S RIBOSOMAL PROTEIN BL35M"/>
    <property type="match status" value="1"/>
</dbReference>
<dbReference type="PANTHER" id="PTHR33343:SF1">
    <property type="entry name" value="LARGE RIBOSOMAL SUBUNIT PROTEIN BL35M"/>
    <property type="match status" value="1"/>
</dbReference>
<dbReference type="Pfam" id="PF01632">
    <property type="entry name" value="Ribosomal_L35p"/>
    <property type="match status" value="1"/>
</dbReference>
<dbReference type="PRINTS" id="PR00064">
    <property type="entry name" value="RIBOSOMALL35"/>
</dbReference>
<dbReference type="SUPFAM" id="SSF143034">
    <property type="entry name" value="L35p-like"/>
    <property type="match status" value="1"/>
</dbReference>
<dbReference type="PROSITE" id="PS00936">
    <property type="entry name" value="RIBOSOMAL_L35"/>
    <property type="match status" value="1"/>
</dbReference>
<proteinExistence type="inferred from homology"/>
<comment type="similarity">
    <text evidence="1">Belongs to the bacterial ribosomal protein bL35 family.</text>
</comment>
<sequence>MPKLKTHRGAAKRFKLTGSGKVRRHHANASHIMTTKTTKRKRNLRKSTILDKRDEKGIKRLIPYL</sequence>
<evidence type="ECO:0000255" key="1">
    <source>
        <dbReference type="HAMAP-Rule" id="MF_00514"/>
    </source>
</evidence>
<evidence type="ECO:0000256" key="2">
    <source>
        <dbReference type="SAM" id="MobiDB-lite"/>
    </source>
</evidence>
<evidence type="ECO:0000305" key="3"/>
<organism>
    <name type="scientific">Syntrophus aciditrophicus (strain SB)</name>
    <dbReference type="NCBI Taxonomy" id="56780"/>
    <lineage>
        <taxon>Bacteria</taxon>
        <taxon>Pseudomonadati</taxon>
        <taxon>Thermodesulfobacteriota</taxon>
        <taxon>Syntrophia</taxon>
        <taxon>Syntrophales</taxon>
        <taxon>Syntrophaceae</taxon>
        <taxon>Syntrophus</taxon>
    </lineage>
</organism>
<keyword id="KW-1185">Reference proteome</keyword>
<keyword id="KW-0687">Ribonucleoprotein</keyword>
<keyword id="KW-0689">Ribosomal protein</keyword>
<feature type="chain" id="PRO_0000258776" description="Large ribosomal subunit protein bL35">
    <location>
        <begin position="1"/>
        <end position="65"/>
    </location>
</feature>
<feature type="region of interest" description="Disordered" evidence="2">
    <location>
        <begin position="20"/>
        <end position="42"/>
    </location>
</feature>
<reference key="1">
    <citation type="journal article" date="2007" name="Proc. Natl. Acad. Sci. U.S.A.">
        <title>The genome of Syntrophus aciditrophicus: life at the thermodynamic limit of microbial growth.</title>
        <authorList>
            <person name="McInerney M.J."/>
            <person name="Rohlin L."/>
            <person name="Mouttaki H."/>
            <person name="Kim U."/>
            <person name="Krupp R.S."/>
            <person name="Rios-Hernandez L."/>
            <person name="Sieber J."/>
            <person name="Struchtemeyer C.G."/>
            <person name="Bhattacharyya A."/>
            <person name="Campbell J.W."/>
            <person name="Gunsalus R.P."/>
        </authorList>
    </citation>
    <scope>NUCLEOTIDE SEQUENCE [LARGE SCALE GENOMIC DNA]</scope>
    <source>
        <strain>SB</strain>
    </source>
</reference>
<accession>Q2LR20</accession>
<gene>
    <name evidence="1" type="primary">rpmI</name>
    <name type="ordered locus">SYNAS_06540</name>
    <name type="ORF">SYN_01719</name>
</gene>